<gene>
    <name type="primary">GPI18</name>
    <name type="ordered locus">AER005C</name>
</gene>
<keyword id="KW-0256">Endoplasmic reticulum</keyword>
<keyword id="KW-0328">Glycosyltransferase</keyword>
<keyword id="KW-0337">GPI-anchor biosynthesis</keyword>
<keyword id="KW-0472">Membrane</keyword>
<keyword id="KW-1185">Reference proteome</keyword>
<keyword id="KW-0808">Transferase</keyword>
<keyword id="KW-0812">Transmembrane</keyword>
<keyword id="KW-1133">Transmembrane helix</keyword>
<accession>Q757K7</accession>
<dbReference type="EC" id="2.4.1.-"/>
<dbReference type="EMBL" id="AE016818">
    <property type="protein sequence ID" value="AAS52689.1"/>
    <property type="molecule type" value="Genomic_DNA"/>
</dbReference>
<dbReference type="RefSeq" id="NP_984865.1">
    <property type="nucleotide sequence ID" value="NM_210219.1"/>
</dbReference>
<dbReference type="FunCoup" id="Q757K7">
    <property type="interactions" value="311"/>
</dbReference>
<dbReference type="STRING" id="284811.Q757K7"/>
<dbReference type="CAZy" id="GT76">
    <property type="family name" value="Glycosyltransferase Family 76"/>
</dbReference>
<dbReference type="EnsemblFungi" id="AAS52689">
    <property type="protein sequence ID" value="AAS52689"/>
    <property type="gene ID" value="AGOS_AER005C"/>
</dbReference>
<dbReference type="GeneID" id="4621064"/>
<dbReference type="KEGG" id="ago:AGOS_AER005C"/>
<dbReference type="eggNOG" id="KOG2647">
    <property type="taxonomic scope" value="Eukaryota"/>
</dbReference>
<dbReference type="HOGENOM" id="CLU_029048_0_0_1"/>
<dbReference type="InParanoid" id="Q757K7"/>
<dbReference type="OMA" id="CEWTLPS"/>
<dbReference type="OrthoDB" id="10252502at2759"/>
<dbReference type="UniPathway" id="UPA00196"/>
<dbReference type="Proteomes" id="UP000000591">
    <property type="component" value="Chromosome V"/>
</dbReference>
<dbReference type="GO" id="GO:0005789">
    <property type="term" value="C:endoplasmic reticulum membrane"/>
    <property type="evidence" value="ECO:0000318"/>
    <property type="project" value="GO_Central"/>
</dbReference>
<dbReference type="GO" id="GO:0120097">
    <property type="term" value="C:glycosylphosphatidylinositol-mannosyltransferase II complex"/>
    <property type="evidence" value="ECO:0007669"/>
    <property type="project" value="EnsemblFungi"/>
</dbReference>
<dbReference type="GO" id="GO:0031501">
    <property type="term" value="C:mannosyltransferase complex"/>
    <property type="evidence" value="ECO:0000318"/>
    <property type="project" value="GO_Central"/>
</dbReference>
<dbReference type="GO" id="GO:0000009">
    <property type="term" value="F:alpha-1,6-mannosyltransferase activity"/>
    <property type="evidence" value="ECO:0007669"/>
    <property type="project" value="EnsemblFungi"/>
</dbReference>
<dbReference type="GO" id="GO:0004376">
    <property type="term" value="F:glycolipid mannosyltransferase activity"/>
    <property type="evidence" value="ECO:0007669"/>
    <property type="project" value="InterPro"/>
</dbReference>
<dbReference type="GO" id="GO:0000030">
    <property type="term" value="F:mannosyltransferase activity"/>
    <property type="evidence" value="ECO:0000318"/>
    <property type="project" value="GO_Central"/>
</dbReference>
<dbReference type="GO" id="GO:0006506">
    <property type="term" value="P:GPI anchor biosynthetic process"/>
    <property type="evidence" value="ECO:0000318"/>
    <property type="project" value="GO_Central"/>
</dbReference>
<dbReference type="InterPro" id="IPR007315">
    <property type="entry name" value="PIG-V/Gpi18"/>
</dbReference>
<dbReference type="PANTHER" id="PTHR12468">
    <property type="entry name" value="GPI MANNOSYLTRANSFERASE 2"/>
    <property type="match status" value="1"/>
</dbReference>
<dbReference type="PANTHER" id="PTHR12468:SF2">
    <property type="entry name" value="GPI MANNOSYLTRANSFERASE 2"/>
    <property type="match status" value="1"/>
</dbReference>
<dbReference type="Pfam" id="PF04188">
    <property type="entry name" value="Mannosyl_trans2"/>
    <property type="match status" value="1"/>
</dbReference>
<name>GPI18_EREGS</name>
<organism>
    <name type="scientific">Eremothecium gossypii (strain ATCC 10895 / CBS 109.51 / FGSC 9923 / NRRL Y-1056)</name>
    <name type="common">Yeast</name>
    <name type="synonym">Ashbya gossypii</name>
    <dbReference type="NCBI Taxonomy" id="284811"/>
    <lineage>
        <taxon>Eukaryota</taxon>
        <taxon>Fungi</taxon>
        <taxon>Dikarya</taxon>
        <taxon>Ascomycota</taxon>
        <taxon>Saccharomycotina</taxon>
        <taxon>Saccharomycetes</taxon>
        <taxon>Saccharomycetales</taxon>
        <taxon>Saccharomycetaceae</taxon>
        <taxon>Eremothecium</taxon>
    </lineage>
</organism>
<evidence type="ECO:0000250" key="1"/>
<evidence type="ECO:0000255" key="2"/>
<evidence type="ECO:0000305" key="3"/>
<feature type="chain" id="PRO_0000246239" description="GPI mannosyltransferase 2">
    <location>
        <begin position="1"/>
        <end position="427"/>
    </location>
</feature>
<feature type="transmembrane region" description="Helical" evidence="2">
    <location>
        <begin position="7"/>
        <end position="27"/>
    </location>
</feature>
<feature type="transmembrane region" description="Helical" evidence="2">
    <location>
        <begin position="119"/>
        <end position="139"/>
    </location>
</feature>
<feature type="transmembrane region" description="Helical" evidence="2">
    <location>
        <begin position="164"/>
        <end position="184"/>
    </location>
</feature>
<feature type="transmembrane region" description="Helical" evidence="2">
    <location>
        <begin position="197"/>
        <end position="217"/>
    </location>
</feature>
<feature type="transmembrane region" description="Helical" evidence="2">
    <location>
        <begin position="247"/>
        <end position="267"/>
    </location>
</feature>
<feature type="transmembrane region" description="Helical" evidence="2">
    <location>
        <begin position="318"/>
        <end position="338"/>
    </location>
</feature>
<feature type="transmembrane region" description="Helical" evidence="2">
    <location>
        <begin position="350"/>
        <end position="370"/>
    </location>
</feature>
<feature type="transmembrane region" description="Helical" evidence="2">
    <location>
        <begin position="404"/>
        <end position="424"/>
    </location>
</feature>
<sequence>MECFKRLTTVFFTVKLVQYLLVYFAPGQFDTSTPLFLEKYQPLQPEKWYHKLLSWDSVYFVKNGLQAVTHTNAYGYVSLPEYEHEWMFSPFVWSQTLKTAGGATLRNWAAPIDTLLVRATLLNLVLHYVSVWLLYALTLRTFPKNRELAYKTSLLFILSSAAGFLLAPYSEPLSFAFSFLGMLLRMLAVEHNVYGGITLAWYNWLPYTLSGICFSVAAANRPNCVLLGVYYIYDVLKLVRQRNWVRAVLFPCIAGSMMLGIFAYMHYYLPSVVFCPERESWCKHSLPWIHIPYKSFYSFVQGYYWRNGFLNYWTWNNVPNFLFALPNLVILWYSTVYFSYQYPLESIRPLVYITRALLLIITFFAHVQIINRISSFIPLHLWYLSDRMIKTTGEAKGDDRLVYLYVNWLILWIPLQTVLFACFLPPA</sequence>
<proteinExistence type="inferred from homology"/>
<reference key="1">
    <citation type="journal article" date="2004" name="Science">
        <title>The Ashbya gossypii genome as a tool for mapping the ancient Saccharomyces cerevisiae genome.</title>
        <authorList>
            <person name="Dietrich F.S."/>
            <person name="Voegeli S."/>
            <person name="Brachat S."/>
            <person name="Lerch A."/>
            <person name="Gates K."/>
            <person name="Steiner S."/>
            <person name="Mohr C."/>
            <person name="Poehlmann R."/>
            <person name="Luedi P."/>
            <person name="Choi S."/>
            <person name="Wing R.A."/>
            <person name="Flavier A."/>
            <person name="Gaffney T.D."/>
            <person name="Philippsen P."/>
        </authorList>
    </citation>
    <scope>NUCLEOTIDE SEQUENCE [LARGE SCALE GENOMIC DNA]</scope>
    <source>
        <strain>ATCC 10895 / CBS 109.51 / FGSC 9923 / NRRL Y-1056</strain>
    </source>
</reference>
<reference key="2">
    <citation type="journal article" date="2013" name="G3 (Bethesda)">
        <title>Genomes of Ashbya fungi isolated from insects reveal four mating-type loci, numerous translocations, lack of transposons, and distinct gene duplications.</title>
        <authorList>
            <person name="Dietrich F.S."/>
            <person name="Voegeli S."/>
            <person name="Kuo S."/>
            <person name="Philippsen P."/>
        </authorList>
    </citation>
    <scope>GENOME REANNOTATION</scope>
    <source>
        <strain>ATCC 10895 / CBS 109.51 / FGSC 9923 / NRRL Y-1056</strain>
    </source>
</reference>
<comment type="function">
    <text evidence="1">Mannosyltransferase involved in glycosylphosphatidylinositol-anchor biosynthesis. Transfers the second mannose to the glycosylphosphatidylinositol during GPI precursor assembly (By similarity).</text>
</comment>
<comment type="pathway">
    <text>Glycolipid biosynthesis; glycosylphosphatidylinositol-anchor biosynthesis.</text>
</comment>
<comment type="subcellular location">
    <subcellularLocation>
        <location evidence="1">Endoplasmic reticulum membrane</location>
        <topology evidence="1">Multi-pass membrane protein</topology>
    </subcellularLocation>
</comment>
<comment type="similarity">
    <text evidence="3">Belongs to the PIGV family.</text>
</comment>
<protein>
    <recommendedName>
        <fullName>GPI mannosyltransferase 2</fullName>
        <ecNumber>2.4.1.-</ecNumber>
    </recommendedName>
    <alternativeName>
        <fullName>GPI mannosyltransferase II</fullName>
        <shortName>GPI-MT-II</shortName>
    </alternativeName>
    <alternativeName>
        <fullName>Glycosylphosphatidylinositol-anchor biosynthesis protein 18</fullName>
    </alternativeName>
</protein>